<sequence length="366" mass="39195">MLIWLVELADHFQFFNLFRYITFRTGAALFTSALIVFLFGPAIISSLRIRQGKGQPIRADGPQTHFKKAGTPTMGGLMILAGIVGSALLWADLSSIYVVSTLLVTLGFGAIGFYDDYLKVTKQSDKGFSGKARLGIEFVIAAIAVFFMMQAAQSAGSAGSTFGSSVTFPFFKDLMLNLGYFFVLFGGFVIVGAGNAVNLTDGLDGLAIVPVMIASAAFGLIAYLAGNAVFANYLQIHFVPGTGELAVILGAVIGAGLGFLWFNAPPAAIFMGDTGSLALGGLIGTVAVATKHEIVMVIIGGLFVIETLSVIIQVFWFKRTGRRVFLMAPIHHHFEKKGWTESQVVIRFWIIAVILAMVGLSTLKLR</sequence>
<name>MRAY_SINFN</name>
<organism>
    <name type="scientific">Sinorhizobium fredii (strain NBRC 101917 / NGR234)</name>
    <dbReference type="NCBI Taxonomy" id="394"/>
    <lineage>
        <taxon>Bacteria</taxon>
        <taxon>Pseudomonadati</taxon>
        <taxon>Pseudomonadota</taxon>
        <taxon>Alphaproteobacteria</taxon>
        <taxon>Hyphomicrobiales</taxon>
        <taxon>Rhizobiaceae</taxon>
        <taxon>Sinorhizobium/Ensifer group</taxon>
        <taxon>Sinorhizobium</taxon>
    </lineage>
</organism>
<comment type="function">
    <text evidence="1">Catalyzes the initial step of the lipid cycle reactions in the biosynthesis of the cell wall peptidoglycan: transfers peptidoglycan precursor phospho-MurNAc-pentapeptide from UDP-MurNAc-pentapeptide onto the lipid carrier undecaprenyl phosphate, yielding undecaprenyl-pyrophosphoryl-MurNAc-pentapeptide, known as lipid I.</text>
</comment>
<comment type="catalytic activity">
    <reaction evidence="1">
        <text>UDP-N-acetyl-alpha-D-muramoyl-L-alanyl-gamma-D-glutamyl-meso-2,6-diaminopimeloyl-D-alanyl-D-alanine + di-trans,octa-cis-undecaprenyl phosphate = di-trans,octa-cis-undecaprenyl diphospho-N-acetyl-alpha-D-muramoyl-L-alanyl-D-glutamyl-meso-2,6-diaminopimeloyl-D-alanyl-D-alanine + UMP</text>
        <dbReference type="Rhea" id="RHEA:28386"/>
        <dbReference type="ChEBI" id="CHEBI:57865"/>
        <dbReference type="ChEBI" id="CHEBI:60392"/>
        <dbReference type="ChEBI" id="CHEBI:61386"/>
        <dbReference type="ChEBI" id="CHEBI:61387"/>
        <dbReference type="EC" id="2.7.8.13"/>
    </reaction>
</comment>
<comment type="cofactor">
    <cofactor evidence="1">
        <name>Mg(2+)</name>
        <dbReference type="ChEBI" id="CHEBI:18420"/>
    </cofactor>
</comment>
<comment type="pathway">
    <text evidence="1">Cell wall biogenesis; peptidoglycan biosynthesis.</text>
</comment>
<comment type="subcellular location">
    <subcellularLocation>
        <location evidence="1">Cell inner membrane</location>
        <topology evidence="1">Multi-pass membrane protein</topology>
    </subcellularLocation>
</comment>
<comment type="similarity">
    <text evidence="1">Belongs to the glycosyltransferase 4 family. MraY subfamily.</text>
</comment>
<accession>C3MEN2</accession>
<gene>
    <name evidence="1" type="primary">mraY</name>
    <name type="ordered locus">NGR_c21100</name>
</gene>
<reference key="1">
    <citation type="journal article" date="2009" name="Appl. Environ. Microbiol.">
        <title>Rhizobium sp. strain NGR234 possesses a remarkable number of secretion systems.</title>
        <authorList>
            <person name="Schmeisser C."/>
            <person name="Liesegang H."/>
            <person name="Krysciak D."/>
            <person name="Bakkou N."/>
            <person name="Le Quere A."/>
            <person name="Wollherr A."/>
            <person name="Heinemeyer I."/>
            <person name="Morgenstern B."/>
            <person name="Pommerening-Roeser A."/>
            <person name="Flores M."/>
            <person name="Palacios R."/>
            <person name="Brenner S."/>
            <person name="Gottschalk G."/>
            <person name="Schmitz R.A."/>
            <person name="Broughton W.J."/>
            <person name="Perret X."/>
            <person name="Strittmatter A.W."/>
            <person name="Streit W.R."/>
        </authorList>
    </citation>
    <scope>NUCLEOTIDE SEQUENCE [LARGE SCALE GENOMIC DNA]</scope>
    <source>
        <strain>NBRC 101917 / NGR234</strain>
    </source>
</reference>
<evidence type="ECO:0000255" key="1">
    <source>
        <dbReference type="HAMAP-Rule" id="MF_00038"/>
    </source>
</evidence>
<feature type="chain" id="PRO_1000117190" description="Phospho-N-acetylmuramoyl-pentapeptide-transferase">
    <location>
        <begin position="1"/>
        <end position="366"/>
    </location>
</feature>
<feature type="transmembrane region" description="Helical" evidence="1">
    <location>
        <begin position="27"/>
        <end position="47"/>
    </location>
</feature>
<feature type="transmembrane region" description="Helical" evidence="1">
    <location>
        <begin position="71"/>
        <end position="91"/>
    </location>
</feature>
<feature type="transmembrane region" description="Helical" evidence="1">
    <location>
        <begin position="93"/>
        <end position="113"/>
    </location>
</feature>
<feature type="transmembrane region" description="Helical" evidence="1">
    <location>
        <begin position="134"/>
        <end position="154"/>
    </location>
</feature>
<feature type="transmembrane region" description="Helical" evidence="1">
    <location>
        <begin position="174"/>
        <end position="194"/>
    </location>
</feature>
<feature type="transmembrane region" description="Helical" evidence="1">
    <location>
        <begin position="205"/>
        <end position="225"/>
    </location>
</feature>
<feature type="transmembrane region" description="Helical" evidence="1">
    <location>
        <begin position="245"/>
        <end position="265"/>
    </location>
</feature>
<feature type="transmembrane region" description="Helical" evidence="1">
    <location>
        <begin position="268"/>
        <end position="288"/>
    </location>
</feature>
<feature type="transmembrane region" description="Helical" evidence="1">
    <location>
        <begin position="297"/>
        <end position="317"/>
    </location>
</feature>
<feature type="transmembrane region" description="Helical" evidence="1">
    <location>
        <begin position="343"/>
        <end position="363"/>
    </location>
</feature>
<proteinExistence type="inferred from homology"/>
<dbReference type="EC" id="2.7.8.13" evidence="1"/>
<dbReference type="EMBL" id="CP001389">
    <property type="protein sequence ID" value="ACP25873.1"/>
    <property type="molecule type" value="Genomic_DNA"/>
</dbReference>
<dbReference type="RefSeq" id="WP_012708636.1">
    <property type="nucleotide sequence ID" value="NC_012587.1"/>
</dbReference>
<dbReference type="RefSeq" id="YP_002826626.1">
    <property type="nucleotide sequence ID" value="NC_012587.1"/>
</dbReference>
<dbReference type="SMR" id="C3MEN2"/>
<dbReference type="STRING" id="394.NGR_c21100"/>
<dbReference type="KEGG" id="rhi:NGR_c21100"/>
<dbReference type="PATRIC" id="fig|394.7.peg.4935"/>
<dbReference type="eggNOG" id="COG0472">
    <property type="taxonomic scope" value="Bacteria"/>
</dbReference>
<dbReference type="HOGENOM" id="CLU_023982_0_0_5"/>
<dbReference type="OrthoDB" id="9805475at2"/>
<dbReference type="UniPathway" id="UPA00219"/>
<dbReference type="Proteomes" id="UP000001054">
    <property type="component" value="Chromosome"/>
</dbReference>
<dbReference type="GO" id="GO:0005886">
    <property type="term" value="C:plasma membrane"/>
    <property type="evidence" value="ECO:0007669"/>
    <property type="project" value="UniProtKB-SubCell"/>
</dbReference>
<dbReference type="GO" id="GO:0046872">
    <property type="term" value="F:metal ion binding"/>
    <property type="evidence" value="ECO:0007669"/>
    <property type="project" value="UniProtKB-KW"/>
</dbReference>
<dbReference type="GO" id="GO:0008963">
    <property type="term" value="F:phospho-N-acetylmuramoyl-pentapeptide-transferase activity"/>
    <property type="evidence" value="ECO:0007669"/>
    <property type="project" value="UniProtKB-UniRule"/>
</dbReference>
<dbReference type="GO" id="GO:0051992">
    <property type="term" value="F:UDP-N-acetylmuramoyl-L-alanyl-D-glutamyl-meso-2,6-diaminopimelyl-D-alanyl-D-alanine:undecaprenyl-phosphate transferase activity"/>
    <property type="evidence" value="ECO:0007669"/>
    <property type="project" value="RHEA"/>
</dbReference>
<dbReference type="GO" id="GO:0051301">
    <property type="term" value="P:cell division"/>
    <property type="evidence" value="ECO:0007669"/>
    <property type="project" value="UniProtKB-KW"/>
</dbReference>
<dbReference type="GO" id="GO:0071555">
    <property type="term" value="P:cell wall organization"/>
    <property type="evidence" value="ECO:0007669"/>
    <property type="project" value="UniProtKB-KW"/>
</dbReference>
<dbReference type="GO" id="GO:0009252">
    <property type="term" value="P:peptidoglycan biosynthetic process"/>
    <property type="evidence" value="ECO:0007669"/>
    <property type="project" value="UniProtKB-UniRule"/>
</dbReference>
<dbReference type="GO" id="GO:0008360">
    <property type="term" value="P:regulation of cell shape"/>
    <property type="evidence" value="ECO:0007669"/>
    <property type="project" value="UniProtKB-KW"/>
</dbReference>
<dbReference type="CDD" id="cd06852">
    <property type="entry name" value="GT_MraY"/>
    <property type="match status" value="1"/>
</dbReference>
<dbReference type="HAMAP" id="MF_00038">
    <property type="entry name" value="MraY"/>
    <property type="match status" value="1"/>
</dbReference>
<dbReference type="InterPro" id="IPR000715">
    <property type="entry name" value="Glycosyl_transferase_4"/>
</dbReference>
<dbReference type="InterPro" id="IPR003524">
    <property type="entry name" value="PNAcMuramoyl-5peptid_Trfase"/>
</dbReference>
<dbReference type="InterPro" id="IPR018480">
    <property type="entry name" value="PNAcMuramoyl-5peptid_Trfase_CS"/>
</dbReference>
<dbReference type="NCBIfam" id="TIGR00445">
    <property type="entry name" value="mraY"/>
    <property type="match status" value="1"/>
</dbReference>
<dbReference type="PANTHER" id="PTHR22926">
    <property type="entry name" value="PHOSPHO-N-ACETYLMURAMOYL-PENTAPEPTIDE-TRANSFERASE"/>
    <property type="match status" value="1"/>
</dbReference>
<dbReference type="PANTHER" id="PTHR22926:SF5">
    <property type="entry name" value="PHOSPHO-N-ACETYLMURAMOYL-PENTAPEPTIDE-TRANSFERASE HOMOLOG"/>
    <property type="match status" value="1"/>
</dbReference>
<dbReference type="Pfam" id="PF00953">
    <property type="entry name" value="Glycos_transf_4"/>
    <property type="match status" value="1"/>
</dbReference>
<dbReference type="Pfam" id="PF10555">
    <property type="entry name" value="MraY_sig1"/>
    <property type="match status" value="1"/>
</dbReference>
<dbReference type="PROSITE" id="PS01347">
    <property type="entry name" value="MRAY_1"/>
    <property type="match status" value="1"/>
</dbReference>
<dbReference type="PROSITE" id="PS01348">
    <property type="entry name" value="MRAY_2"/>
    <property type="match status" value="1"/>
</dbReference>
<keyword id="KW-0131">Cell cycle</keyword>
<keyword id="KW-0132">Cell division</keyword>
<keyword id="KW-0997">Cell inner membrane</keyword>
<keyword id="KW-1003">Cell membrane</keyword>
<keyword id="KW-0133">Cell shape</keyword>
<keyword id="KW-0961">Cell wall biogenesis/degradation</keyword>
<keyword id="KW-0460">Magnesium</keyword>
<keyword id="KW-0472">Membrane</keyword>
<keyword id="KW-0479">Metal-binding</keyword>
<keyword id="KW-0573">Peptidoglycan synthesis</keyword>
<keyword id="KW-1185">Reference proteome</keyword>
<keyword id="KW-0808">Transferase</keyword>
<keyword id="KW-0812">Transmembrane</keyword>
<keyword id="KW-1133">Transmembrane helix</keyword>
<protein>
    <recommendedName>
        <fullName evidence="1">Phospho-N-acetylmuramoyl-pentapeptide-transferase</fullName>
        <ecNumber evidence="1">2.7.8.13</ecNumber>
    </recommendedName>
    <alternativeName>
        <fullName evidence="1">UDP-MurNAc-pentapeptide phosphotransferase</fullName>
    </alternativeName>
</protein>